<comment type="function">
    <text evidence="1">Plays an important role in the de novo pathway of purine nucleotide biosynthesis. Catalyzes the first committed step in the biosynthesis of AMP from IMP.</text>
</comment>
<comment type="catalytic activity">
    <reaction evidence="1">
        <text>IMP + L-aspartate + GTP = N(6)-(1,2-dicarboxyethyl)-AMP + GDP + phosphate + 2 H(+)</text>
        <dbReference type="Rhea" id="RHEA:15753"/>
        <dbReference type="ChEBI" id="CHEBI:15378"/>
        <dbReference type="ChEBI" id="CHEBI:29991"/>
        <dbReference type="ChEBI" id="CHEBI:37565"/>
        <dbReference type="ChEBI" id="CHEBI:43474"/>
        <dbReference type="ChEBI" id="CHEBI:57567"/>
        <dbReference type="ChEBI" id="CHEBI:58053"/>
        <dbReference type="ChEBI" id="CHEBI:58189"/>
        <dbReference type="EC" id="6.3.4.4"/>
    </reaction>
</comment>
<comment type="cofactor">
    <cofactor evidence="1">
        <name>Mg(2+)</name>
        <dbReference type="ChEBI" id="CHEBI:18420"/>
    </cofactor>
    <text evidence="1">Binds 1 Mg(2+) ion per subunit.</text>
</comment>
<comment type="pathway">
    <text evidence="1">Purine metabolism; AMP biosynthesis via de novo pathway; AMP from IMP: step 1/2.</text>
</comment>
<comment type="subunit">
    <text evidence="1">Homodimer.</text>
</comment>
<comment type="subcellular location">
    <subcellularLocation>
        <location evidence="1">Cytoplasm</location>
    </subcellularLocation>
</comment>
<comment type="similarity">
    <text evidence="1">Belongs to the adenylosuccinate synthetase family.</text>
</comment>
<keyword id="KW-0963">Cytoplasm</keyword>
<keyword id="KW-0342">GTP-binding</keyword>
<keyword id="KW-0436">Ligase</keyword>
<keyword id="KW-0460">Magnesium</keyword>
<keyword id="KW-0479">Metal-binding</keyword>
<keyword id="KW-0547">Nucleotide-binding</keyword>
<keyword id="KW-0658">Purine biosynthesis</keyword>
<keyword id="KW-1185">Reference proteome</keyword>
<evidence type="ECO:0000255" key="1">
    <source>
        <dbReference type="HAMAP-Rule" id="MF_00011"/>
    </source>
</evidence>
<gene>
    <name evidence="1" type="primary">purA</name>
    <name type="ordered locus">sce8895</name>
</gene>
<protein>
    <recommendedName>
        <fullName evidence="1">Adenylosuccinate synthetase</fullName>
        <shortName evidence="1">AMPSase</shortName>
        <shortName evidence="1">AdSS</shortName>
        <ecNumber evidence="1">6.3.4.4</ecNumber>
    </recommendedName>
    <alternativeName>
        <fullName evidence="1">IMP--aspartate ligase</fullName>
    </alternativeName>
</protein>
<feature type="chain" id="PRO_1000073962" description="Adenylosuccinate synthetase">
    <location>
        <begin position="1"/>
        <end position="427"/>
    </location>
</feature>
<feature type="active site" description="Proton acceptor" evidence="1">
    <location>
        <position position="13"/>
    </location>
</feature>
<feature type="active site" description="Proton donor" evidence="1">
    <location>
        <position position="41"/>
    </location>
</feature>
<feature type="binding site" evidence="1">
    <location>
        <begin position="12"/>
        <end position="18"/>
    </location>
    <ligand>
        <name>GTP</name>
        <dbReference type="ChEBI" id="CHEBI:37565"/>
    </ligand>
</feature>
<feature type="binding site" description="in other chain" evidence="1">
    <location>
        <begin position="13"/>
        <end position="16"/>
    </location>
    <ligand>
        <name>IMP</name>
        <dbReference type="ChEBI" id="CHEBI:58053"/>
        <note>ligand shared between dimeric partners</note>
    </ligand>
</feature>
<feature type="binding site" evidence="1">
    <location>
        <position position="13"/>
    </location>
    <ligand>
        <name>Mg(2+)</name>
        <dbReference type="ChEBI" id="CHEBI:18420"/>
    </ligand>
</feature>
<feature type="binding site" description="in other chain" evidence="1">
    <location>
        <begin position="38"/>
        <end position="41"/>
    </location>
    <ligand>
        <name>IMP</name>
        <dbReference type="ChEBI" id="CHEBI:58053"/>
        <note>ligand shared between dimeric partners</note>
    </ligand>
</feature>
<feature type="binding site" evidence="1">
    <location>
        <begin position="40"/>
        <end position="42"/>
    </location>
    <ligand>
        <name>GTP</name>
        <dbReference type="ChEBI" id="CHEBI:37565"/>
    </ligand>
</feature>
<feature type="binding site" evidence="1">
    <location>
        <position position="40"/>
    </location>
    <ligand>
        <name>Mg(2+)</name>
        <dbReference type="ChEBI" id="CHEBI:18420"/>
    </ligand>
</feature>
<feature type="binding site" description="in other chain" evidence="1">
    <location>
        <position position="130"/>
    </location>
    <ligand>
        <name>IMP</name>
        <dbReference type="ChEBI" id="CHEBI:58053"/>
        <note>ligand shared between dimeric partners</note>
    </ligand>
</feature>
<feature type="binding site" evidence="1">
    <location>
        <position position="144"/>
    </location>
    <ligand>
        <name>IMP</name>
        <dbReference type="ChEBI" id="CHEBI:58053"/>
        <note>ligand shared between dimeric partners</note>
    </ligand>
</feature>
<feature type="binding site" description="in other chain" evidence="1">
    <location>
        <position position="224"/>
    </location>
    <ligand>
        <name>IMP</name>
        <dbReference type="ChEBI" id="CHEBI:58053"/>
        <note>ligand shared between dimeric partners</note>
    </ligand>
</feature>
<feature type="binding site" description="in other chain" evidence="1">
    <location>
        <position position="239"/>
    </location>
    <ligand>
        <name>IMP</name>
        <dbReference type="ChEBI" id="CHEBI:58053"/>
        <note>ligand shared between dimeric partners</note>
    </ligand>
</feature>
<feature type="binding site" evidence="1">
    <location>
        <begin position="299"/>
        <end position="305"/>
    </location>
    <ligand>
        <name>substrate</name>
    </ligand>
</feature>
<feature type="binding site" description="in other chain" evidence="1">
    <location>
        <position position="303"/>
    </location>
    <ligand>
        <name>IMP</name>
        <dbReference type="ChEBI" id="CHEBI:58053"/>
        <note>ligand shared between dimeric partners</note>
    </ligand>
</feature>
<feature type="binding site" evidence="1">
    <location>
        <position position="305"/>
    </location>
    <ligand>
        <name>GTP</name>
        <dbReference type="ChEBI" id="CHEBI:37565"/>
    </ligand>
</feature>
<feature type="binding site" evidence="1">
    <location>
        <begin position="331"/>
        <end position="333"/>
    </location>
    <ligand>
        <name>GTP</name>
        <dbReference type="ChEBI" id="CHEBI:37565"/>
    </ligand>
</feature>
<feature type="binding site" evidence="1">
    <location>
        <begin position="411"/>
        <end position="413"/>
    </location>
    <ligand>
        <name>GTP</name>
        <dbReference type="ChEBI" id="CHEBI:37565"/>
    </ligand>
</feature>
<proteinExistence type="inferred from homology"/>
<dbReference type="EC" id="6.3.4.4" evidence="1"/>
<dbReference type="EMBL" id="AM746676">
    <property type="protein sequence ID" value="CAN99067.1"/>
    <property type="molecule type" value="Genomic_DNA"/>
</dbReference>
<dbReference type="RefSeq" id="WP_012241506.1">
    <property type="nucleotide sequence ID" value="NC_010162.1"/>
</dbReference>
<dbReference type="SMR" id="A9G5S0"/>
<dbReference type="STRING" id="448385.sce8895"/>
<dbReference type="KEGG" id="scl:sce8895"/>
<dbReference type="eggNOG" id="COG0104">
    <property type="taxonomic scope" value="Bacteria"/>
</dbReference>
<dbReference type="HOGENOM" id="CLU_029848_0_0_7"/>
<dbReference type="OrthoDB" id="9807553at2"/>
<dbReference type="BioCyc" id="SCEL448385:SCE_RS45575-MONOMER"/>
<dbReference type="UniPathway" id="UPA00075">
    <property type="reaction ID" value="UER00335"/>
</dbReference>
<dbReference type="Proteomes" id="UP000002139">
    <property type="component" value="Chromosome"/>
</dbReference>
<dbReference type="GO" id="GO:0005737">
    <property type="term" value="C:cytoplasm"/>
    <property type="evidence" value="ECO:0007669"/>
    <property type="project" value="UniProtKB-SubCell"/>
</dbReference>
<dbReference type="GO" id="GO:0004019">
    <property type="term" value="F:adenylosuccinate synthase activity"/>
    <property type="evidence" value="ECO:0007669"/>
    <property type="project" value="UniProtKB-UniRule"/>
</dbReference>
<dbReference type="GO" id="GO:0005525">
    <property type="term" value="F:GTP binding"/>
    <property type="evidence" value="ECO:0007669"/>
    <property type="project" value="UniProtKB-UniRule"/>
</dbReference>
<dbReference type="GO" id="GO:0000287">
    <property type="term" value="F:magnesium ion binding"/>
    <property type="evidence" value="ECO:0007669"/>
    <property type="project" value="UniProtKB-UniRule"/>
</dbReference>
<dbReference type="GO" id="GO:0044208">
    <property type="term" value="P:'de novo' AMP biosynthetic process"/>
    <property type="evidence" value="ECO:0007669"/>
    <property type="project" value="UniProtKB-UniRule"/>
</dbReference>
<dbReference type="GO" id="GO:0046040">
    <property type="term" value="P:IMP metabolic process"/>
    <property type="evidence" value="ECO:0007669"/>
    <property type="project" value="TreeGrafter"/>
</dbReference>
<dbReference type="CDD" id="cd03108">
    <property type="entry name" value="AdSS"/>
    <property type="match status" value="1"/>
</dbReference>
<dbReference type="FunFam" id="1.10.300.10:FF:000001">
    <property type="entry name" value="Adenylosuccinate synthetase"/>
    <property type="match status" value="1"/>
</dbReference>
<dbReference type="FunFam" id="3.90.170.10:FF:000001">
    <property type="entry name" value="Adenylosuccinate synthetase"/>
    <property type="match status" value="1"/>
</dbReference>
<dbReference type="Gene3D" id="3.40.440.10">
    <property type="entry name" value="Adenylosuccinate Synthetase, subunit A, domain 1"/>
    <property type="match status" value="1"/>
</dbReference>
<dbReference type="Gene3D" id="1.10.300.10">
    <property type="entry name" value="Adenylosuccinate Synthetase, subunit A, domain 2"/>
    <property type="match status" value="1"/>
</dbReference>
<dbReference type="Gene3D" id="3.90.170.10">
    <property type="entry name" value="Adenylosuccinate Synthetase, subunit A, domain 3"/>
    <property type="match status" value="1"/>
</dbReference>
<dbReference type="HAMAP" id="MF_00011">
    <property type="entry name" value="Adenylosucc_synth"/>
    <property type="match status" value="1"/>
</dbReference>
<dbReference type="InterPro" id="IPR018220">
    <property type="entry name" value="Adenylosuccin_syn_GTP-bd"/>
</dbReference>
<dbReference type="InterPro" id="IPR033128">
    <property type="entry name" value="Adenylosuccin_syn_Lys_AS"/>
</dbReference>
<dbReference type="InterPro" id="IPR042109">
    <property type="entry name" value="Adenylosuccinate_synth_dom1"/>
</dbReference>
<dbReference type="InterPro" id="IPR042110">
    <property type="entry name" value="Adenylosuccinate_synth_dom2"/>
</dbReference>
<dbReference type="InterPro" id="IPR042111">
    <property type="entry name" value="Adenylosuccinate_synth_dom3"/>
</dbReference>
<dbReference type="InterPro" id="IPR001114">
    <property type="entry name" value="Adenylosuccinate_synthetase"/>
</dbReference>
<dbReference type="InterPro" id="IPR027417">
    <property type="entry name" value="P-loop_NTPase"/>
</dbReference>
<dbReference type="NCBIfam" id="NF002223">
    <property type="entry name" value="PRK01117.1"/>
    <property type="match status" value="1"/>
</dbReference>
<dbReference type="NCBIfam" id="TIGR00184">
    <property type="entry name" value="purA"/>
    <property type="match status" value="1"/>
</dbReference>
<dbReference type="PANTHER" id="PTHR11846">
    <property type="entry name" value="ADENYLOSUCCINATE SYNTHETASE"/>
    <property type="match status" value="1"/>
</dbReference>
<dbReference type="PANTHER" id="PTHR11846:SF0">
    <property type="entry name" value="ADENYLOSUCCINATE SYNTHETASE"/>
    <property type="match status" value="1"/>
</dbReference>
<dbReference type="Pfam" id="PF00709">
    <property type="entry name" value="Adenylsucc_synt"/>
    <property type="match status" value="1"/>
</dbReference>
<dbReference type="SMART" id="SM00788">
    <property type="entry name" value="Adenylsucc_synt"/>
    <property type="match status" value="1"/>
</dbReference>
<dbReference type="SUPFAM" id="SSF52540">
    <property type="entry name" value="P-loop containing nucleoside triphosphate hydrolases"/>
    <property type="match status" value="1"/>
</dbReference>
<dbReference type="PROSITE" id="PS01266">
    <property type="entry name" value="ADENYLOSUCCIN_SYN_1"/>
    <property type="match status" value="1"/>
</dbReference>
<dbReference type="PROSITE" id="PS00513">
    <property type="entry name" value="ADENYLOSUCCIN_SYN_2"/>
    <property type="match status" value="1"/>
</dbReference>
<accession>A9G5S0</accession>
<name>PURA_SORC5</name>
<organism>
    <name type="scientific">Sorangium cellulosum (strain So ce56)</name>
    <name type="common">Polyangium cellulosum (strain So ce56)</name>
    <dbReference type="NCBI Taxonomy" id="448385"/>
    <lineage>
        <taxon>Bacteria</taxon>
        <taxon>Pseudomonadati</taxon>
        <taxon>Myxococcota</taxon>
        <taxon>Polyangia</taxon>
        <taxon>Polyangiales</taxon>
        <taxon>Polyangiaceae</taxon>
        <taxon>Sorangium</taxon>
    </lineage>
</organism>
<sequence length="427" mass="45340">MTAIVIVGAQWGDEGKGKVVDLYTESADLVVRYAGGPNAGHTLVVGGEKLIVRLIPSGILRSNARCVMAQGMVVDPGVLVSEIDAVEARGCSTQGRLFVSDRAHLILPFHPLVDSLREAAAADGVRLGTTKRGIGPCYEDKASRRGARLGDLRDMKRLAQLVSRSLEAWTPTLRALGGEPPSLDAILDELTPLAKRITPLLADTSQLIDGALRRGERVLLEGAQGTLLDIDHGTFPFVTSSSAIAGGACVGAGVGPTRIRRVLGLAKAYCTRVGEGPFPTELDGPLGERLRSVGGEYGSVTGRPRRTGWLDLPALRYAARVNGLDGIALTKLDVLTGMPELKVCVAYDTPSGRTREFPIDDIATAKPVLETVAEWSEPIDAARSMTELPAAARHYVEMVEKETGVPVDVVSVGADREATIVRRNAFA</sequence>
<reference key="1">
    <citation type="journal article" date="2007" name="Nat. Biotechnol.">
        <title>Complete genome sequence of the myxobacterium Sorangium cellulosum.</title>
        <authorList>
            <person name="Schneiker S."/>
            <person name="Perlova O."/>
            <person name="Kaiser O."/>
            <person name="Gerth K."/>
            <person name="Alici A."/>
            <person name="Altmeyer M.O."/>
            <person name="Bartels D."/>
            <person name="Bekel T."/>
            <person name="Beyer S."/>
            <person name="Bode E."/>
            <person name="Bode H.B."/>
            <person name="Bolten C.J."/>
            <person name="Choudhuri J.V."/>
            <person name="Doss S."/>
            <person name="Elnakady Y.A."/>
            <person name="Frank B."/>
            <person name="Gaigalat L."/>
            <person name="Goesmann A."/>
            <person name="Groeger C."/>
            <person name="Gross F."/>
            <person name="Jelsbak L."/>
            <person name="Jelsbak L."/>
            <person name="Kalinowski J."/>
            <person name="Kegler C."/>
            <person name="Knauber T."/>
            <person name="Konietzny S."/>
            <person name="Kopp M."/>
            <person name="Krause L."/>
            <person name="Krug D."/>
            <person name="Linke B."/>
            <person name="Mahmud T."/>
            <person name="Martinez-Arias R."/>
            <person name="McHardy A.C."/>
            <person name="Merai M."/>
            <person name="Meyer F."/>
            <person name="Mormann S."/>
            <person name="Munoz-Dorado J."/>
            <person name="Perez J."/>
            <person name="Pradella S."/>
            <person name="Rachid S."/>
            <person name="Raddatz G."/>
            <person name="Rosenau F."/>
            <person name="Rueckert C."/>
            <person name="Sasse F."/>
            <person name="Scharfe M."/>
            <person name="Schuster S.C."/>
            <person name="Suen G."/>
            <person name="Treuner-Lange A."/>
            <person name="Velicer G.J."/>
            <person name="Vorholter F.-J."/>
            <person name="Weissman K.J."/>
            <person name="Welch R.D."/>
            <person name="Wenzel S.C."/>
            <person name="Whitworth D.E."/>
            <person name="Wilhelm S."/>
            <person name="Wittmann C."/>
            <person name="Bloecker H."/>
            <person name="Puehler A."/>
            <person name="Mueller R."/>
        </authorList>
    </citation>
    <scope>NUCLEOTIDE SEQUENCE [LARGE SCALE GENOMIC DNA]</scope>
    <source>
        <strain>So ce56</strain>
    </source>
</reference>